<protein>
    <recommendedName>
        <fullName evidence="1">Photosystem II reaction center protein M</fullName>
        <shortName evidence="1">PSII-M</shortName>
    </recommendedName>
</protein>
<comment type="function">
    <text evidence="1">One of the components of the core complex of photosystem II (PSII). PSII is a light-driven water:plastoquinone oxidoreductase that uses light energy to abstract electrons from H(2)O, generating O(2) and a proton gradient subsequently used for ATP formation. It consists of a core antenna complex that captures photons, and an electron transfer chain that converts photonic excitation into a charge separation. This subunit is found at the monomer-monomer interface.</text>
</comment>
<comment type="subunit">
    <text evidence="1">PSII is composed of 1 copy each of membrane proteins PsbA, PsbB, PsbC, PsbD, PsbE, PsbF, PsbH, PsbI, PsbJ, PsbK, PsbL, PsbM, PsbT, PsbX, PsbY, PsbZ, Psb30/Ycf12, peripheral proteins PsbO, CyanoQ (PsbQ), PsbU, PsbV and a large number of cofactors. It forms dimeric complexes.</text>
</comment>
<comment type="subcellular location">
    <subcellularLocation>
        <location evidence="1">Cellular thylakoid membrane</location>
        <topology evidence="1">Single-pass membrane protein</topology>
    </subcellularLocation>
</comment>
<comment type="similarity">
    <text evidence="1">Belongs to the PsbM family.</text>
</comment>
<proteinExistence type="inferred from homology"/>
<feature type="chain" id="PRO_1000124441" description="Photosystem II reaction center protein M">
    <location>
        <begin position="1"/>
        <end position="35"/>
    </location>
</feature>
<feature type="transmembrane region" description="Helical" evidence="1">
    <location>
        <begin position="7"/>
        <end position="27"/>
    </location>
</feature>
<evidence type="ECO:0000255" key="1">
    <source>
        <dbReference type="HAMAP-Rule" id="MF_00438"/>
    </source>
</evidence>
<sequence length="35" mass="3997">MQVNDLGFIATILFVLVPTVFLLILYIQTRKETEG</sequence>
<gene>
    <name evidence="1" type="primary">psbM</name>
    <name type="ordered locus">PCC8801_2861</name>
</gene>
<dbReference type="EMBL" id="CP001287">
    <property type="protein sequence ID" value="ACK66860.1"/>
    <property type="molecule type" value="Genomic_DNA"/>
</dbReference>
<dbReference type="RefSeq" id="WP_012596126.1">
    <property type="nucleotide sequence ID" value="NC_011726.1"/>
</dbReference>
<dbReference type="SMR" id="B7JV08"/>
<dbReference type="STRING" id="41431.PCC8801_2861"/>
<dbReference type="KEGG" id="cyp:PCC8801_2861"/>
<dbReference type="eggNOG" id="ENOG50339PB">
    <property type="taxonomic scope" value="Bacteria"/>
</dbReference>
<dbReference type="HOGENOM" id="CLU_215415_0_0_3"/>
<dbReference type="OrthoDB" id="532820at2"/>
<dbReference type="Proteomes" id="UP000008204">
    <property type="component" value="Chromosome"/>
</dbReference>
<dbReference type="GO" id="GO:0009523">
    <property type="term" value="C:photosystem II"/>
    <property type="evidence" value="ECO:0007669"/>
    <property type="project" value="UniProtKB-KW"/>
</dbReference>
<dbReference type="GO" id="GO:0031676">
    <property type="term" value="C:plasma membrane-derived thylakoid membrane"/>
    <property type="evidence" value="ECO:0007669"/>
    <property type="project" value="UniProtKB-SubCell"/>
</dbReference>
<dbReference type="GO" id="GO:0019684">
    <property type="term" value="P:photosynthesis, light reaction"/>
    <property type="evidence" value="ECO:0007669"/>
    <property type="project" value="InterPro"/>
</dbReference>
<dbReference type="HAMAP" id="MF_00438">
    <property type="entry name" value="PSII_PsbM"/>
    <property type="match status" value="1"/>
</dbReference>
<dbReference type="InterPro" id="IPR007826">
    <property type="entry name" value="PSII_PsbM"/>
</dbReference>
<dbReference type="InterPro" id="IPR037269">
    <property type="entry name" value="PSII_PsbM_sf"/>
</dbReference>
<dbReference type="NCBIfam" id="TIGR03038">
    <property type="entry name" value="PS_II_psbM"/>
    <property type="match status" value="1"/>
</dbReference>
<dbReference type="PANTHER" id="PTHR35774">
    <property type="entry name" value="PHOTOSYSTEM II REACTION CENTER PROTEIN M"/>
    <property type="match status" value="1"/>
</dbReference>
<dbReference type="PANTHER" id="PTHR35774:SF1">
    <property type="entry name" value="PHOTOSYSTEM II REACTION CENTER PROTEIN M"/>
    <property type="match status" value="1"/>
</dbReference>
<dbReference type="Pfam" id="PF05151">
    <property type="entry name" value="PsbM"/>
    <property type="match status" value="1"/>
</dbReference>
<dbReference type="SUPFAM" id="SSF161033">
    <property type="entry name" value="Photosystem II reaction center protein M, PsbM"/>
    <property type="match status" value="1"/>
</dbReference>
<organism>
    <name type="scientific">Rippkaea orientalis (strain PCC 8801 / RF-1)</name>
    <name type="common">Cyanothece sp. (strain PCC 8801)</name>
    <dbReference type="NCBI Taxonomy" id="41431"/>
    <lineage>
        <taxon>Bacteria</taxon>
        <taxon>Bacillati</taxon>
        <taxon>Cyanobacteriota</taxon>
        <taxon>Cyanophyceae</taxon>
        <taxon>Oscillatoriophycideae</taxon>
        <taxon>Chroococcales</taxon>
        <taxon>Aphanothecaceae</taxon>
        <taxon>Rippkaea</taxon>
        <taxon>Rippkaea orientalis</taxon>
    </lineage>
</organism>
<name>PSBM_RIPO1</name>
<keyword id="KW-0472">Membrane</keyword>
<keyword id="KW-0602">Photosynthesis</keyword>
<keyword id="KW-0604">Photosystem II</keyword>
<keyword id="KW-0674">Reaction center</keyword>
<keyword id="KW-1185">Reference proteome</keyword>
<keyword id="KW-0793">Thylakoid</keyword>
<keyword id="KW-0812">Transmembrane</keyword>
<keyword id="KW-1133">Transmembrane helix</keyword>
<reference key="1">
    <citation type="journal article" date="2011" name="MBio">
        <title>Novel metabolic attributes of the genus Cyanothece, comprising a group of unicellular nitrogen-fixing Cyanobacteria.</title>
        <authorList>
            <person name="Bandyopadhyay A."/>
            <person name="Elvitigala T."/>
            <person name="Welsh E."/>
            <person name="Stockel J."/>
            <person name="Liberton M."/>
            <person name="Min H."/>
            <person name="Sherman L.A."/>
            <person name="Pakrasi H.B."/>
        </authorList>
    </citation>
    <scope>NUCLEOTIDE SEQUENCE [LARGE SCALE GENOMIC DNA]</scope>
    <source>
        <strain>PCC 8801 / RF-1</strain>
    </source>
</reference>
<accession>B7JV08</accession>